<protein>
    <recommendedName>
        <fullName evidence="1">Small ribosomal subunit protein eS17</fullName>
    </recommendedName>
    <alternativeName>
        <fullName evidence="2">30S ribosomal protein S17e</fullName>
    </alternativeName>
</protein>
<evidence type="ECO:0000255" key="1">
    <source>
        <dbReference type="HAMAP-Rule" id="MF_00511"/>
    </source>
</evidence>
<evidence type="ECO:0000305" key="2"/>
<evidence type="ECO:0007829" key="3">
    <source>
        <dbReference type="PDB" id="7ZHG"/>
    </source>
</evidence>
<accession>Q9V0G0</accession>
<accession>G8ZH36</accession>
<organism>
    <name type="scientific">Pyrococcus abyssi (strain GE5 / Orsay)</name>
    <dbReference type="NCBI Taxonomy" id="272844"/>
    <lineage>
        <taxon>Archaea</taxon>
        <taxon>Methanobacteriati</taxon>
        <taxon>Methanobacteriota</taxon>
        <taxon>Thermococci</taxon>
        <taxon>Thermococcales</taxon>
        <taxon>Thermococcaceae</taxon>
        <taxon>Pyrococcus</taxon>
    </lineage>
</organism>
<name>RS17E_PYRAB</name>
<comment type="similarity">
    <text evidence="1">Belongs to the eukaryotic ribosomal protein eS17 family.</text>
</comment>
<gene>
    <name evidence="1" type="primary">rps17e</name>
    <name type="ordered locus">PYRAB08290</name>
    <name type="ORF">PAB7207</name>
</gene>
<proteinExistence type="evidence at protein level"/>
<keyword id="KW-0002">3D-structure</keyword>
<keyword id="KW-0687">Ribonucleoprotein</keyword>
<keyword id="KW-0689">Ribosomal protein</keyword>
<dbReference type="EMBL" id="AJ248285">
    <property type="protein sequence ID" value="CAB49743.1"/>
    <property type="molecule type" value="Genomic_DNA"/>
</dbReference>
<dbReference type="EMBL" id="HE613800">
    <property type="protein sequence ID" value="CCE70231.1"/>
    <property type="molecule type" value="Genomic_DNA"/>
</dbReference>
<dbReference type="PIR" id="F75128">
    <property type="entry name" value="F75128"/>
</dbReference>
<dbReference type="RefSeq" id="WP_010867951.1">
    <property type="nucleotide sequence ID" value="NC_000868.1"/>
</dbReference>
<dbReference type="PDB" id="6SW9">
    <property type="method" value="EM"/>
    <property type="resolution" value="4.20 A"/>
    <property type="chains" value="S=1-67"/>
</dbReference>
<dbReference type="PDB" id="6SWC">
    <property type="method" value="EM"/>
    <property type="resolution" value="3.30 A"/>
    <property type="chains" value="S=1-67"/>
</dbReference>
<dbReference type="PDB" id="6SWE">
    <property type="method" value="EM"/>
    <property type="resolution" value="3.10 A"/>
    <property type="chains" value="S=1-67"/>
</dbReference>
<dbReference type="PDB" id="7ZAG">
    <property type="method" value="EM"/>
    <property type="resolution" value="2.77 A"/>
    <property type="chains" value="S=1-67"/>
</dbReference>
<dbReference type="PDB" id="7ZAH">
    <property type="method" value="EM"/>
    <property type="resolution" value="2.70 A"/>
    <property type="chains" value="S=1-67"/>
</dbReference>
<dbReference type="PDB" id="7ZAI">
    <property type="method" value="EM"/>
    <property type="resolution" value="2.60 A"/>
    <property type="chains" value="S=1-67"/>
</dbReference>
<dbReference type="PDB" id="7ZHG">
    <property type="method" value="EM"/>
    <property type="resolution" value="2.25 A"/>
    <property type="chains" value="S=1-67"/>
</dbReference>
<dbReference type="PDBsum" id="6SW9"/>
<dbReference type="PDBsum" id="6SWC"/>
<dbReference type="PDBsum" id="6SWE"/>
<dbReference type="PDBsum" id="7ZAG"/>
<dbReference type="PDBsum" id="7ZAH"/>
<dbReference type="PDBsum" id="7ZAI"/>
<dbReference type="PDBsum" id="7ZHG"/>
<dbReference type="EMDB" id="EMD-10320"/>
<dbReference type="EMDB" id="EMD-10322"/>
<dbReference type="EMDB" id="EMD-10324"/>
<dbReference type="EMDB" id="EMD-14579"/>
<dbReference type="EMDB" id="EMD-14580"/>
<dbReference type="EMDB" id="EMD-14581"/>
<dbReference type="EMDB" id="EMD-14731"/>
<dbReference type="EMDB" id="EMD-8148"/>
<dbReference type="SMR" id="Q9V0G0"/>
<dbReference type="STRING" id="272844.PAB7207"/>
<dbReference type="KEGG" id="pab:PAB7207"/>
<dbReference type="PATRIC" id="fig|272844.11.peg.875"/>
<dbReference type="eggNOG" id="arCOG01885">
    <property type="taxonomic scope" value="Archaea"/>
</dbReference>
<dbReference type="HOGENOM" id="CLU_176720_1_0_2"/>
<dbReference type="OrthoDB" id="52479at2157"/>
<dbReference type="PhylomeDB" id="Q9V0G0"/>
<dbReference type="Proteomes" id="UP000000810">
    <property type="component" value="Chromosome"/>
</dbReference>
<dbReference type="Proteomes" id="UP000009139">
    <property type="component" value="Chromosome"/>
</dbReference>
<dbReference type="GO" id="GO:0005829">
    <property type="term" value="C:cytosol"/>
    <property type="evidence" value="ECO:0007669"/>
    <property type="project" value="UniProtKB-ARBA"/>
</dbReference>
<dbReference type="GO" id="GO:1990904">
    <property type="term" value="C:ribonucleoprotein complex"/>
    <property type="evidence" value="ECO:0007669"/>
    <property type="project" value="UniProtKB-KW"/>
</dbReference>
<dbReference type="GO" id="GO:0005840">
    <property type="term" value="C:ribosome"/>
    <property type="evidence" value="ECO:0007669"/>
    <property type="project" value="UniProtKB-KW"/>
</dbReference>
<dbReference type="GO" id="GO:0003735">
    <property type="term" value="F:structural constituent of ribosome"/>
    <property type="evidence" value="ECO:0007669"/>
    <property type="project" value="InterPro"/>
</dbReference>
<dbReference type="GO" id="GO:0006412">
    <property type="term" value="P:translation"/>
    <property type="evidence" value="ECO:0007669"/>
    <property type="project" value="UniProtKB-UniRule"/>
</dbReference>
<dbReference type="Gene3D" id="1.10.60.20">
    <property type="entry name" value="Ribosomal protein S17e-like"/>
    <property type="match status" value="1"/>
</dbReference>
<dbReference type="HAMAP" id="MF_00511">
    <property type="entry name" value="Ribosomal_eS17"/>
    <property type="match status" value="1"/>
</dbReference>
<dbReference type="InterPro" id="IPR001210">
    <property type="entry name" value="Ribosomal_eS17"/>
</dbReference>
<dbReference type="InterPro" id="IPR018273">
    <property type="entry name" value="Ribosomal_eS17_CS"/>
</dbReference>
<dbReference type="InterPro" id="IPR036401">
    <property type="entry name" value="Ribosomal_eS17_sf"/>
</dbReference>
<dbReference type="NCBIfam" id="NF002242">
    <property type="entry name" value="PRK01151.1"/>
    <property type="match status" value="1"/>
</dbReference>
<dbReference type="PANTHER" id="PTHR10732">
    <property type="entry name" value="40S RIBOSOMAL PROTEIN S17"/>
    <property type="match status" value="1"/>
</dbReference>
<dbReference type="PANTHER" id="PTHR10732:SF0">
    <property type="entry name" value="40S RIBOSOMAL PROTEIN S17"/>
    <property type="match status" value="1"/>
</dbReference>
<dbReference type="Pfam" id="PF00833">
    <property type="entry name" value="Ribosomal_S17e"/>
    <property type="match status" value="1"/>
</dbReference>
<dbReference type="SUPFAM" id="SSF116820">
    <property type="entry name" value="Rps17e-like"/>
    <property type="match status" value="1"/>
</dbReference>
<dbReference type="PROSITE" id="PS00712">
    <property type="entry name" value="RIBOSOMAL_S17E"/>
    <property type="match status" value="1"/>
</dbReference>
<sequence>MGKIRQGFIKRVARELFNKYPNEFTRDFEHNKKKVEELTNVTSKKIRNRIAGYITKLVRMKEEGKIL</sequence>
<reference key="1">
    <citation type="journal article" date="2003" name="Mol. Microbiol.">
        <title>An integrated analysis of the genome of the hyperthermophilic archaeon Pyrococcus abyssi.</title>
        <authorList>
            <person name="Cohen G.N."/>
            <person name="Barbe V."/>
            <person name="Flament D."/>
            <person name="Galperin M."/>
            <person name="Heilig R."/>
            <person name="Lecompte O."/>
            <person name="Poch O."/>
            <person name="Prieur D."/>
            <person name="Querellou J."/>
            <person name="Ripp R."/>
            <person name="Thierry J.-C."/>
            <person name="Van der Oost J."/>
            <person name="Weissenbach J."/>
            <person name="Zivanovic Y."/>
            <person name="Forterre P."/>
        </authorList>
    </citation>
    <scope>NUCLEOTIDE SEQUENCE [LARGE SCALE GENOMIC DNA]</scope>
    <source>
        <strain>GE5 / Orsay</strain>
    </source>
</reference>
<reference key="2">
    <citation type="journal article" date="2012" name="Curr. Microbiol.">
        <title>Re-annotation of two hyperthermophilic archaea Pyrococcus abyssi GE5 and Pyrococcus furiosus DSM 3638.</title>
        <authorList>
            <person name="Gao J."/>
            <person name="Wang J."/>
        </authorList>
    </citation>
    <scope>GENOME REANNOTATION</scope>
    <source>
        <strain>GE5 / Orsay</strain>
    </source>
</reference>
<feature type="chain" id="PRO_0000141560" description="Small ribosomal subunit protein eS17">
    <location>
        <begin position="1"/>
        <end position="67"/>
    </location>
</feature>
<feature type="helix" evidence="3">
    <location>
        <begin position="7"/>
        <end position="19"/>
    </location>
</feature>
<feature type="helix" evidence="3">
    <location>
        <begin position="21"/>
        <end position="23"/>
    </location>
</feature>
<feature type="helix" evidence="3">
    <location>
        <begin position="28"/>
        <end position="38"/>
    </location>
</feature>
<feature type="helix" evidence="3">
    <location>
        <begin position="44"/>
        <end position="62"/>
    </location>
</feature>